<feature type="chain" id="PRO_0000212097" description="Ribosomal RNA small subunit methyltransferase J">
    <location>
        <begin position="1"/>
        <end position="259"/>
    </location>
</feature>
<feature type="binding site" evidence="1">
    <location>
        <begin position="101"/>
        <end position="102"/>
    </location>
    <ligand>
        <name>S-adenosyl-L-methionine</name>
        <dbReference type="ChEBI" id="CHEBI:59789"/>
    </ligand>
</feature>
<feature type="binding site" evidence="1">
    <location>
        <begin position="117"/>
        <end position="118"/>
    </location>
    <ligand>
        <name>S-adenosyl-L-methionine</name>
        <dbReference type="ChEBI" id="CHEBI:59789"/>
    </ligand>
</feature>
<feature type="binding site" evidence="1">
    <location>
        <begin position="153"/>
        <end position="154"/>
    </location>
    <ligand>
        <name>S-adenosyl-L-methionine</name>
        <dbReference type="ChEBI" id="CHEBI:59789"/>
    </ligand>
</feature>
<feature type="binding site" evidence="1">
    <location>
        <position position="176"/>
    </location>
    <ligand>
        <name>S-adenosyl-L-methionine</name>
        <dbReference type="ChEBI" id="CHEBI:59789"/>
    </ligand>
</feature>
<sequence>MQLQLICEDAALQPYLDAIASKWQLTHDADSHFALVLTFERLELRKLDEPKLGAIYVDLAGGAVAHRRKFGGGKGQAIAKAAGLNKGATPTVLDGTAGLGRDAFVLASLGCKVQMVERNPVVAALLDDGLTRAKKDDEIGAWVSERMSLLHASSHDALAALASDAEFVRPDVVYLDPMYPHPENKKKTALVKKEMRVFQSLVGADTDADALLTPALALATKRVVVKRPDYAEWLDGVKPSMAIETKKNRFDVYVNASMS</sequence>
<dbReference type="EC" id="2.1.1.242" evidence="1"/>
<dbReference type="EMBL" id="AE016795">
    <property type="protein sequence ID" value="AAO09588.1"/>
    <property type="molecule type" value="Genomic_DNA"/>
</dbReference>
<dbReference type="RefSeq" id="WP_011079128.1">
    <property type="nucleotide sequence ID" value="NC_004459.3"/>
</dbReference>
<dbReference type="SMR" id="Q8DD95"/>
<dbReference type="KEGG" id="vvu:VV1_1112"/>
<dbReference type="HOGENOM" id="CLU_076324_0_0_6"/>
<dbReference type="Proteomes" id="UP000002275">
    <property type="component" value="Chromosome 1"/>
</dbReference>
<dbReference type="GO" id="GO:0005737">
    <property type="term" value="C:cytoplasm"/>
    <property type="evidence" value="ECO:0007669"/>
    <property type="project" value="UniProtKB-SubCell"/>
</dbReference>
<dbReference type="GO" id="GO:0008990">
    <property type="term" value="F:rRNA (guanine-N2-)-methyltransferase activity"/>
    <property type="evidence" value="ECO:0007669"/>
    <property type="project" value="UniProtKB-UniRule"/>
</dbReference>
<dbReference type="Gene3D" id="3.40.50.150">
    <property type="entry name" value="Vaccinia Virus protein VP39"/>
    <property type="match status" value="1"/>
</dbReference>
<dbReference type="Gene3D" id="3.40.1630.10">
    <property type="entry name" value="YhiQ-like domain"/>
    <property type="match status" value="1"/>
</dbReference>
<dbReference type="HAMAP" id="MF_01523">
    <property type="entry name" value="16SrRNA_methyltr_J"/>
    <property type="match status" value="1"/>
</dbReference>
<dbReference type="InterPro" id="IPR007536">
    <property type="entry name" value="16SrRNA_methylTrfase_J"/>
</dbReference>
<dbReference type="InterPro" id="IPR029063">
    <property type="entry name" value="SAM-dependent_MTases_sf"/>
</dbReference>
<dbReference type="PANTHER" id="PTHR36112">
    <property type="entry name" value="RIBOSOMAL RNA SMALL SUBUNIT METHYLTRANSFERASE J"/>
    <property type="match status" value="1"/>
</dbReference>
<dbReference type="PANTHER" id="PTHR36112:SF1">
    <property type="entry name" value="RIBOSOMAL RNA SMALL SUBUNIT METHYLTRANSFERASE J"/>
    <property type="match status" value="1"/>
</dbReference>
<dbReference type="Pfam" id="PF04445">
    <property type="entry name" value="SAM_MT"/>
    <property type="match status" value="1"/>
</dbReference>
<dbReference type="SUPFAM" id="SSF53335">
    <property type="entry name" value="S-adenosyl-L-methionine-dependent methyltransferases"/>
    <property type="match status" value="1"/>
</dbReference>
<keyword id="KW-0963">Cytoplasm</keyword>
<keyword id="KW-0489">Methyltransferase</keyword>
<keyword id="KW-0698">rRNA processing</keyword>
<keyword id="KW-0949">S-adenosyl-L-methionine</keyword>
<keyword id="KW-0808">Transferase</keyword>
<comment type="function">
    <text evidence="1">Specifically methylates the guanosine in position 1516 of 16S rRNA.</text>
</comment>
<comment type="catalytic activity">
    <reaction evidence="1">
        <text>guanosine(1516) in 16S rRNA + S-adenosyl-L-methionine = N(2)-methylguanosine(1516) in 16S rRNA + S-adenosyl-L-homocysteine + H(+)</text>
        <dbReference type="Rhea" id="RHEA:43220"/>
        <dbReference type="Rhea" id="RHEA-COMP:10412"/>
        <dbReference type="Rhea" id="RHEA-COMP:10413"/>
        <dbReference type="ChEBI" id="CHEBI:15378"/>
        <dbReference type="ChEBI" id="CHEBI:57856"/>
        <dbReference type="ChEBI" id="CHEBI:59789"/>
        <dbReference type="ChEBI" id="CHEBI:74269"/>
        <dbReference type="ChEBI" id="CHEBI:74481"/>
        <dbReference type="EC" id="2.1.1.242"/>
    </reaction>
</comment>
<comment type="subcellular location">
    <subcellularLocation>
        <location evidence="1">Cytoplasm</location>
    </subcellularLocation>
</comment>
<comment type="similarity">
    <text evidence="1">Belongs to the methyltransferase superfamily. RsmJ family.</text>
</comment>
<name>RSMJ_VIBVU</name>
<proteinExistence type="inferred from homology"/>
<protein>
    <recommendedName>
        <fullName evidence="1">Ribosomal RNA small subunit methyltransferase J</fullName>
        <ecNumber evidence="1">2.1.1.242</ecNumber>
    </recommendedName>
    <alternativeName>
        <fullName evidence="1">16S rRNA m2G1516 methyltransferase</fullName>
    </alternativeName>
    <alternativeName>
        <fullName evidence="1">rRNA (guanine-N(2)-)-methyltransferase</fullName>
    </alternativeName>
</protein>
<reference key="1">
    <citation type="submission" date="2002-12" db="EMBL/GenBank/DDBJ databases">
        <title>Complete genome sequence of Vibrio vulnificus CMCP6.</title>
        <authorList>
            <person name="Rhee J.H."/>
            <person name="Kim S.Y."/>
            <person name="Chung S.S."/>
            <person name="Kim J.J."/>
            <person name="Moon Y.H."/>
            <person name="Jeong H."/>
            <person name="Choy H.E."/>
        </authorList>
    </citation>
    <scope>NUCLEOTIDE SEQUENCE [LARGE SCALE GENOMIC DNA]</scope>
    <source>
        <strain>CMCP6</strain>
    </source>
</reference>
<gene>
    <name evidence="1" type="primary">rsmJ</name>
    <name type="ordered locus">VV1_1112</name>
</gene>
<organism>
    <name type="scientific">Vibrio vulnificus (strain CMCP6)</name>
    <dbReference type="NCBI Taxonomy" id="216895"/>
    <lineage>
        <taxon>Bacteria</taxon>
        <taxon>Pseudomonadati</taxon>
        <taxon>Pseudomonadota</taxon>
        <taxon>Gammaproteobacteria</taxon>
        <taxon>Vibrionales</taxon>
        <taxon>Vibrionaceae</taxon>
        <taxon>Vibrio</taxon>
    </lineage>
</organism>
<evidence type="ECO:0000255" key="1">
    <source>
        <dbReference type="HAMAP-Rule" id="MF_01523"/>
    </source>
</evidence>
<accession>Q8DD95</accession>